<comment type="function">
    <text evidence="1">Binds as a heterodimer with protein bS6 to the central domain of the 16S rRNA, where it helps stabilize the platform of the 30S subunit.</text>
</comment>
<comment type="subunit">
    <text evidence="1">Part of the 30S ribosomal subunit. Forms a tight heterodimer with protein bS6.</text>
</comment>
<comment type="similarity">
    <text evidence="1">Belongs to the bacterial ribosomal protein bS18 family.</text>
</comment>
<accession>B1LYI3</accession>
<proteinExistence type="inferred from homology"/>
<reference key="1">
    <citation type="submission" date="2008-03" db="EMBL/GenBank/DDBJ databases">
        <title>Complete sequence of chromosome of Methylobacterium radiotolerans JCM 2831.</title>
        <authorList>
            <consortium name="US DOE Joint Genome Institute"/>
            <person name="Copeland A."/>
            <person name="Lucas S."/>
            <person name="Lapidus A."/>
            <person name="Glavina del Rio T."/>
            <person name="Dalin E."/>
            <person name="Tice H."/>
            <person name="Bruce D."/>
            <person name="Goodwin L."/>
            <person name="Pitluck S."/>
            <person name="Kiss H."/>
            <person name="Brettin T."/>
            <person name="Detter J.C."/>
            <person name="Han C."/>
            <person name="Kuske C.R."/>
            <person name="Schmutz J."/>
            <person name="Larimer F."/>
            <person name="Land M."/>
            <person name="Hauser L."/>
            <person name="Kyrpides N."/>
            <person name="Mikhailova N."/>
            <person name="Marx C.J."/>
            <person name="Richardson P."/>
        </authorList>
    </citation>
    <scope>NUCLEOTIDE SEQUENCE [LARGE SCALE GENOMIC DNA]</scope>
    <source>
        <strain>ATCC 27329 / DSM 1819 / JCM 2831 / NBRC 15690 / NCIMB 10815 / 0-1</strain>
    </source>
</reference>
<gene>
    <name evidence="1" type="primary">rpsR</name>
    <name type="ordered locus">Mrad2831_5420</name>
</gene>
<name>RS18_METRJ</name>
<organism>
    <name type="scientific">Methylobacterium radiotolerans (strain ATCC 27329 / DSM 1819 / JCM 2831 / NBRC 15690 / NCIMB 10815 / 0-1)</name>
    <dbReference type="NCBI Taxonomy" id="426355"/>
    <lineage>
        <taxon>Bacteria</taxon>
        <taxon>Pseudomonadati</taxon>
        <taxon>Pseudomonadota</taxon>
        <taxon>Alphaproteobacteria</taxon>
        <taxon>Hyphomicrobiales</taxon>
        <taxon>Methylobacteriaceae</taxon>
        <taxon>Methylobacterium</taxon>
    </lineage>
</organism>
<protein>
    <recommendedName>
        <fullName evidence="1">Small ribosomal subunit protein bS18</fullName>
    </recommendedName>
    <alternativeName>
        <fullName evidence="2">30S ribosomal protein S18</fullName>
    </alternativeName>
</protein>
<sequence>MAFGAGAGGGRRPFFRRRKTCPFSGANAPKIDYKDVKLLSRYVSERGKIVPSRITAVSAKKQRELAQAIKRARFLGLLPYVIK</sequence>
<feature type="chain" id="PRO_0000345495" description="Small ribosomal subunit protein bS18">
    <location>
        <begin position="1"/>
        <end position="83"/>
    </location>
</feature>
<dbReference type="EMBL" id="CP001001">
    <property type="protein sequence ID" value="ACB27367.1"/>
    <property type="molecule type" value="Genomic_DNA"/>
</dbReference>
<dbReference type="RefSeq" id="WP_007561044.1">
    <property type="nucleotide sequence ID" value="NC_010505.1"/>
</dbReference>
<dbReference type="SMR" id="B1LYI3"/>
<dbReference type="STRING" id="426355.Mrad2831_5420"/>
<dbReference type="GeneID" id="96601997"/>
<dbReference type="KEGG" id="mrd:Mrad2831_5420"/>
<dbReference type="eggNOG" id="COG0238">
    <property type="taxonomic scope" value="Bacteria"/>
</dbReference>
<dbReference type="HOGENOM" id="CLU_148710_2_3_5"/>
<dbReference type="OrthoDB" id="9812008at2"/>
<dbReference type="Proteomes" id="UP000006589">
    <property type="component" value="Chromosome"/>
</dbReference>
<dbReference type="GO" id="GO:0022627">
    <property type="term" value="C:cytosolic small ribosomal subunit"/>
    <property type="evidence" value="ECO:0007669"/>
    <property type="project" value="TreeGrafter"/>
</dbReference>
<dbReference type="GO" id="GO:0070181">
    <property type="term" value="F:small ribosomal subunit rRNA binding"/>
    <property type="evidence" value="ECO:0007669"/>
    <property type="project" value="TreeGrafter"/>
</dbReference>
<dbReference type="GO" id="GO:0003735">
    <property type="term" value="F:structural constituent of ribosome"/>
    <property type="evidence" value="ECO:0007669"/>
    <property type="project" value="InterPro"/>
</dbReference>
<dbReference type="GO" id="GO:0006412">
    <property type="term" value="P:translation"/>
    <property type="evidence" value="ECO:0007669"/>
    <property type="project" value="UniProtKB-UniRule"/>
</dbReference>
<dbReference type="FunFam" id="4.10.640.10:FF:000006">
    <property type="entry name" value="30S ribosomal protein S18"/>
    <property type="match status" value="1"/>
</dbReference>
<dbReference type="Gene3D" id="4.10.640.10">
    <property type="entry name" value="Ribosomal protein S18"/>
    <property type="match status" value="1"/>
</dbReference>
<dbReference type="HAMAP" id="MF_00270">
    <property type="entry name" value="Ribosomal_bS18"/>
    <property type="match status" value="1"/>
</dbReference>
<dbReference type="InterPro" id="IPR001648">
    <property type="entry name" value="Ribosomal_bS18"/>
</dbReference>
<dbReference type="InterPro" id="IPR018275">
    <property type="entry name" value="Ribosomal_bS18_CS"/>
</dbReference>
<dbReference type="InterPro" id="IPR036870">
    <property type="entry name" value="Ribosomal_bS18_sf"/>
</dbReference>
<dbReference type="NCBIfam" id="TIGR00165">
    <property type="entry name" value="S18"/>
    <property type="match status" value="1"/>
</dbReference>
<dbReference type="PANTHER" id="PTHR13479">
    <property type="entry name" value="30S RIBOSOMAL PROTEIN S18"/>
    <property type="match status" value="1"/>
</dbReference>
<dbReference type="PANTHER" id="PTHR13479:SF40">
    <property type="entry name" value="SMALL RIBOSOMAL SUBUNIT PROTEIN BS18M"/>
    <property type="match status" value="1"/>
</dbReference>
<dbReference type="Pfam" id="PF01084">
    <property type="entry name" value="Ribosomal_S18"/>
    <property type="match status" value="1"/>
</dbReference>
<dbReference type="PRINTS" id="PR00974">
    <property type="entry name" value="RIBOSOMALS18"/>
</dbReference>
<dbReference type="SUPFAM" id="SSF46911">
    <property type="entry name" value="Ribosomal protein S18"/>
    <property type="match status" value="1"/>
</dbReference>
<dbReference type="PROSITE" id="PS00057">
    <property type="entry name" value="RIBOSOMAL_S18"/>
    <property type="match status" value="1"/>
</dbReference>
<evidence type="ECO:0000255" key="1">
    <source>
        <dbReference type="HAMAP-Rule" id="MF_00270"/>
    </source>
</evidence>
<evidence type="ECO:0000305" key="2"/>
<keyword id="KW-0687">Ribonucleoprotein</keyword>
<keyword id="KW-0689">Ribosomal protein</keyword>
<keyword id="KW-0694">RNA-binding</keyword>
<keyword id="KW-0699">rRNA-binding</keyword>